<proteinExistence type="inferred from homology"/>
<keyword id="KW-0067">ATP-binding</keyword>
<keyword id="KW-0963">Cytoplasm</keyword>
<keyword id="KW-0235">DNA replication</keyword>
<keyword id="KW-0238">DNA-binding</keyword>
<keyword id="KW-0446">Lipid-binding</keyword>
<keyword id="KW-0547">Nucleotide-binding</keyword>
<dbReference type="EMBL" id="CP001020">
    <property type="protein sequence ID" value="ACJ19331.1"/>
    <property type="molecule type" value="Genomic_DNA"/>
</dbReference>
<dbReference type="RefSeq" id="WP_005769932.1">
    <property type="nucleotide sequence ID" value="NC_011528.1"/>
</dbReference>
<dbReference type="SMR" id="B6J8S3"/>
<dbReference type="KEGG" id="cbc:CbuK_0001"/>
<dbReference type="HOGENOM" id="CLU_026910_0_1_6"/>
<dbReference type="GO" id="GO:0005737">
    <property type="term" value="C:cytoplasm"/>
    <property type="evidence" value="ECO:0007669"/>
    <property type="project" value="UniProtKB-SubCell"/>
</dbReference>
<dbReference type="GO" id="GO:0005886">
    <property type="term" value="C:plasma membrane"/>
    <property type="evidence" value="ECO:0007669"/>
    <property type="project" value="TreeGrafter"/>
</dbReference>
<dbReference type="GO" id="GO:0005524">
    <property type="term" value="F:ATP binding"/>
    <property type="evidence" value="ECO:0007669"/>
    <property type="project" value="UniProtKB-UniRule"/>
</dbReference>
<dbReference type="GO" id="GO:0016887">
    <property type="term" value="F:ATP hydrolysis activity"/>
    <property type="evidence" value="ECO:0007669"/>
    <property type="project" value="InterPro"/>
</dbReference>
<dbReference type="GO" id="GO:0003688">
    <property type="term" value="F:DNA replication origin binding"/>
    <property type="evidence" value="ECO:0007669"/>
    <property type="project" value="UniProtKB-UniRule"/>
</dbReference>
<dbReference type="GO" id="GO:0008289">
    <property type="term" value="F:lipid binding"/>
    <property type="evidence" value="ECO:0007669"/>
    <property type="project" value="UniProtKB-KW"/>
</dbReference>
<dbReference type="GO" id="GO:0006270">
    <property type="term" value="P:DNA replication initiation"/>
    <property type="evidence" value="ECO:0007669"/>
    <property type="project" value="UniProtKB-UniRule"/>
</dbReference>
<dbReference type="GO" id="GO:0006275">
    <property type="term" value="P:regulation of DNA replication"/>
    <property type="evidence" value="ECO:0007669"/>
    <property type="project" value="UniProtKB-UniRule"/>
</dbReference>
<dbReference type="CDD" id="cd00009">
    <property type="entry name" value="AAA"/>
    <property type="match status" value="1"/>
</dbReference>
<dbReference type="CDD" id="cd06571">
    <property type="entry name" value="Bac_DnaA_C"/>
    <property type="match status" value="1"/>
</dbReference>
<dbReference type="FunFam" id="1.10.1750.10:FF:000001">
    <property type="entry name" value="Chromosomal replication initiator protein DnaA"/>
    <property type="match status" value="1"/>
</dbReference>
<dbReference type="FunFam" id="1.10.8.60:FF:000003">
    <property type="entry name" value="Chromosomal replication initiator protein DnaA"/>
    <property type="match status" value="1"/>
</dbReference>
<dbReference type="FunFam" id="3.40.50.300:FF:000103">
    <property type="entry name" value="Chromosomal replication initiator protein DnaA"/>
    <property type="match status" value="1"/>
</dbReference>
<dbReference type="Gene3D" id="1.10.1750.10">
    <property type="match status" value="1"/>
</dbReference>
<dbReference type="Gene3D" id="1.10.8.60">
    <property type="match status" value="1"/>
</dbReference>
<dbReference type="Gene3D" id="3.30.300.180">
    <property type="match status" value="1"/>
</dbReference>
<dbReference type="Gene3D" id="3.40.50.300">
    <property type="entry name" value="P-loop containing nucleotide triphosphate hydrolases"/>
    <property type="match status" value="1"/>
</dbReference>
<dbReference type="HAMAP" id="MF_00377">
    <property type="entry name" value="DnaA_bact"/>
    <property type="match status" value="1"/>
</dbReference>
<dbReference type="InterPro" id="IPR003593">
    <property type="entry name" value="AAA+_ATPase"/>
</dbReference>
<dbReference type="InterPro" id="IPR001957">
    <property type="entry name" value="Chromosome_initiator_DnaA"/>
</dbReference>
<dbReference type="InterPro" id="IPR020591">
    <property type="entry name" value="Chromosome_initiator_DnaA-like"/>
</dbReference>
<dbReference type="InterPro" id="IPR018312">
    <property type="entry name" value="Chromosome_initiator_DnaA_CS"/>
</dbReference>
<dbReference type="InterPro" id="IPR013159">
    <property type="entry name" value="DnaA_C"/>
</dbReference>
<dbReference type="InterPro" id="IPR013317">
    <property type="entry name" value="DnaA_dom"/>
</dbReference>
<dbReference type="InterPro" id="IPR024633">
    <property type="entry name" value="DnaA_N_dom"/>
</dbReference>
<dbReference type="InterPro" id="IPR038454">
    <property type="entry name" value="DnaA_N_sf"/>
</dbReference>
<dbReference type="InterPro" id="IPR027417">
    <property type="entry name" value="P-loop_NTPase"/>
</dbReference>
<dbReference type="InterPro" id="IPR010921">
    <property type="entry name" value="Trp_repressor/repl_initiator"/>
</dbReference>
<dbReference type="NCBIfam" id="TIGR00362">
    <property type="entry name" value="DnaA"/>
    <property type="match status" value="1"/>
</dbReference>
<dbReference type="PANTHER" id="PTHR30050">
    <property type="entry name" value="CHROMOSOMAL REPLICATION INITIATOR PROTEIN DNAA"/>
    <property type="match status" value="1"/>
</dbReference>
<dbReference type="PANTHER" id="PTHR30050:SF2">
    <property type="entry name" value="CHROMOSOMAL REPLICATION INITIATOR PROTEIN DNAA"/>
    <property type="match status" value="1"/>
</dbReference>
<dbReference type="Pfam" id="PF00308">
    <property type="entry name" value="Bac_DnaA"/>
    <property type="match status" value="1"/>
</dbReference>
<dbReference type="Pfam" id="PF08299">
    <property type="entry name" value="Bac_DnaA_C"/>
    <property type="match status" value="1"/>
</dbReference>
<dbReference type="Pfam" id="PF11638">
    <property type="entry name" value="DnaA_N"/>
    <property type="match status" value="1"/>
</dbReference>
<dbReference type="PRINTS" id="PR00051">
    <property type="entry name" value="DNAA"/>
</dbReference>
<dbReference type="SMART" id="SM00382">
    <property type="entry name" value="AAA"/>
    <property type="match status" value="1"/>
</dbReference>
<dbReference type="SMART" id="SM00760">
    <property type="entry name" value="Bac_DnaA_C"/>
    <property type="match status" value="1"/>
</dbReference>
<dbReference type="SUPFAM" id="SSF52540">
    <property type="entry name" value="P-loop containing nucleoside triphosphate hydrolases"/>
    <property type="match status" value="1"/>
</dbReference>
<dbReference type="SUPFAM" id="SSF48295">
    <property type="entry name" value="TrpR-like"/>
    <property type="match status" value="1"/>
</dbReference>
<dbReference type="PROSITE" id="PS01008">
    <property type="entry name" value="DNAA"/>
    <property type="match status" value="1"/>
</dbReference>
<comment type="function">
    <text evidence="1">Plays an essential role in the initiation and regulation of chromosomal replication. ATP-DnaA binds to the origin of replication (oriC) to initiate formation of the DNA replication initiation complex once per cell cycle. Binds the DnaA box (a 9 base pair repeat at the origin) and separates the double-stranded (ds)DNA. Forms a right-handed helical filament on oriC DNA; dsDNA binds to the exterior of the filament while single-stranded (ss)DNA is stabiized in the filament's interior. The ATP-DnaA-oriC complex binds and stabilizes one strand of the AT-rich DNA unwinding element (DUE), permitting loading of DNA polymerase. After initiation quickly degrades to an ADP-DnaA complex that is not apt for DNA replication. Binds acidic phospholipids.</text>
</comment>
<comment type="subunit">
    <text evidence="1">Oligomerizes as a right-handed, spiral filament on DNA at oriC.</text>
</comment>
<comment type="subcellular location">
    <subcellularLocation>
        <location evidence="1">Cytoplasm</location>
    </subcellularLocation>
</comment>
<comment type="domain">
    <text evidence="1">Domain I is involved in oligomerization and binding regulators, domain II is flexibile and of varying length in different bacteria, domain III forms the AAA+ region, while domain IV binds dsDNA.</text>
</comment>
<comment type="similarity">
    <text evidence="1">Belongs to the DnaA family.</text>
</comment>
<protein>
    <recommendedName>
        <fullName evidence="1">Chromosomal replication initiator protein DnaA</fullName>
    </recommendedName>
</protein>
<feature type="chain" id="PRO_1000121966" description="Chromosomal replication initiator protein DnaA">
    <location>
        <begin position="1"/>
        <end position="451"/>
    </location>
</feature>
<feature type="region of interest" description="Domain I, interacts with DnaA modulators" evidence="1">
    <location>
        <begin position="1"/>
        <end position="72"/>
    </location>
</feature>
<feature type="region of interest" description="Domain II" evidence="1">
    <location>
        <begin position="72"/>
        <end position="114"/>
    </location>
</feature>
<feature type="region of interest" description="Disordered" evidence="2">
    <location>
        <begin position="81"/>
        <end position="106"/>
    </location>
</feature>
<feature type="region of interest" description="Domain III, AAA+ region" evidence="1">
    <location>
        <begin position="115"/>
        <end position="331"/>
    </location>
</feature>
<feature type="region of interest" description="Domain IV, binds dsDNA" evidence="1">
    <location>
        <begin position="332"/>
        <end position="451"/>
    </location>
</feature>
<feature type="compositionally biased region" description="Polar residues" evidence="2">
    <location>
        <begin position="81"/>
        <end position="90"/>
    </location>
</feature>
<feature type="binding site" evidence="1">
    <location>
        <position position="159"/>
    </location>
    <ligand>
        <name>ATP</name>
        <dbReference type="ChEBI" id="CHEBI:30616"/>
    </ligand>
</feature>
<feature type="binding site" evidence="1">
    <location>
        <position position="161"/>
    </location>
    <ligand>
        <name>ATP</name>
        <dbReference type="ChEBI" id="CHEBI:30616"/>
    </ligand>
</feature>
<feature type="binding site" evidence="1">
    <location>
        <position position="162"/>
    </location>
    <ligand>
        <name>ATP</name>
        <dbReference type="ChEBI" id="CHEBI:30616"/>
    </ligand>
</feature>
<feature type="binding site" evidence="1">
    <location>
        <position position="163"/>
    </location>
    <ligand>
        <name>ATP</name>
        <dbReference type="ChEBI" id="CHEBI:30616"/>
    </ligand>
</feature>
<gene>
    <name evidence="1" type="primary">dnaA</name>
    <name type="ordered locus">CbuK_0001</name>
</gene>
<accession>B6J8S3</accession>
<evidence type="ECO:0000255" key="1">
    <source>
        <dbReference type="HAMAP-Rule" id="MF_00377"/>
    </source>
</evidence>
<evidence type="ECO:0000256" key="2">
    <source>
        <dbReference type="SAM" id="MobiDB-lite"/>
    </source>
</evidence>
<reference key="1">
    <citation type="journal article" date="2009" name="Infect. Immun.">
        <title>Comparative genomics reveal extensive transposon-mediated genomic plasticity and diversity among potential effector proteins within the genus Coxiella.</title>
        <authorList>
            <person name="Beare P.A."/>
            <person name="Unsworth N."/>
            <person name="Andoh M."/>
            <person name="Voth D.E."/>
            <person name="Omsland A."/>
            <person name="Gilk S.D."/>
            <person name="Williams K.P."/>
            <person name="Sobral B.W."/>
            <person name="Kupko J.J. III"/>
            <person name="Porcella S.F."/>
            <person name="Samuel J.E."/>
            <person name="Heinzen R.A."/>
        </authorList>
    </citation>
    <scope>NUCLEOTIDE SEQUENCE [LARGE SCALE GENOMIC DNA]</scope>
    <source>
        <strain>CbuK_Q154</strain>
    </source>
</reference>
<sequence length="451" mass="51096">MSLPTSLWDKCLGYLRDEIPPQQYNTWIRPLHAIESKQNGLLLLAPNRFVLDWINERFLNRITELLDELSDTPPQIRLQIGSRSTEMPTKNSHEPSHRKAAAPPAGTTISHTQANINSNFTFDSFVEGKSNQLARAAATQVAENPGQAYNPLFIYGGVGLGKTHLMHAVGNAILRKDSSKKVLYLHSERFVADMIKALQHNAMNEFKRFYRSLNALLIDDIQFFAGKDRSQEEFFHTFNALLDGQQQIILTCDRYPKEINGLEERLQSRFGWGLTVAIEPPELETRVAILMSKAEQLKVHLPHEVAFFIAKHIQSNVRELEGALKRVIANAHFTGQSITVDFTREALKDLLTLQARLITIENIQKTVAEYYKIKVADLLAKRRNRSVARPRQMAMALAKELTNHSLPEIGDAFGGRDHTTVLHACRKVKELLATSLDILEDYKNLMRILSG</sequence>
<name>DNAA_COXB1</name>
<organism>
    <name type="scientific">Coxiella burnetii (strain CbuK_Q154)</name>
    <name type="common">Coxiella burnetii (strain Q154)</name>
    <dbReference type="NCBI Taxonomy" id="434924"/>
    <lineage>
        <taxon>Bacteria</taxon>
        <taxon>Pseudomonadati</taxon>
        <taxon>Pseudomonadota</taxon>
        <taxon>Gammaproteobacteria</taxon>
        <taxon>Legionellales</taxon>
        <taxon>Coxiellaceae</taxon>
        <taxon>Coxiella</taxon>
    </lineage>
</organism>